<feature type="chain" id="PRO_1000012973" description="UPF0145 protein AHA_2580">
    <location>
        <begin position="1"/>
        <end position="105"/>
    </location>
</feature>
<keyword id="KW-1185">Reference proteome</keyword>
<proteinExistence type="inferred from homology"/>
<reference key="1">
    <citation type="journal article" date="2006" name="J. Bacteriol.">
        <title>Genome sequence of Aeromonas hydrophila ATCC 7966T: jack of all trades.</title>
        <authorList>
            <person name="Seshadri R."/>
            <person name="Joseph S.W."/>
            <person name="Chopra A.K."/>
            <person name="Sha J."/>
            <person name="Shaw J."/>
            <person name="Graf J."/>
            <person name="Haft D.H."/>
            <person name="Wu M."/>
            <person name="Ren Q."/>
            <person name="Rosovitz M.J."/>
            <person name="Madupu R."/>
            <person name="Tallon L."/>
            <person name="Kim M."/>
            <person name="Jin S."/>
            <person name="Vuong H."/>
            <person name="Stine O.C."/>
            <person name="Ali A."/>
            <person name="Horneman A.J."/>
            <person name="Heidelberg J.F."/>
        </authorList>
    </citation>
    <scope>NUCLEOTIDE SEQUENCE [LARGE SCALE GENOMIC DNA]</scope>
    <source>
        <strain>ATCC 7966 / DSM 30187 / BCRC 13018 / CCUG 14551 / JCM 1027 / KCTC 2358 / NCIMB 9240 / NCTC 8049</strain>
    </source>
</reference>
<comment type="similarity">
    <text evidence="1">Belongs to the UPF0145 family.</text>
</comment>
<sequence>MILSTTPTLEGKTIREYRGIVVGEAILGANVFKDLFAGIRDIIGGRSGAYEKELARAREIAFDELKERAAALGANAVVGIDIDYEVVGQSGSMLMVSISGTAVLV</sequence>
<organism>
    <name type="scientific">Aeromonas hydrophila subsp. hydrophila (strain ATCC 7966 / DSM 30187 / BCRC 13018 / CCUG 14551 / JCM 1027 / KCTC 2358 / NCIMB 9240 / NCTC 8049)</name>
    <dbReference type="NCBI Taxonomy" id="380703"/>
    <lineage>
        <taxon>Bacteria</taxon>
        <taxon>Pseudomonadati</taxon>
        <taxon>Pseudomonadota</taxon>
        <taxon>Gammaproteobacteria</taxon>
        <taxon>Aeromonadales</taxon>
        <taxon>Aeromonadaceae</taxon>
        <taxon>Aeromonas</taxon>
    </lineage>
</organism>
<evidence type="ECO:0000255" key="1">
    <source>
        <dbReference type="HAMAP-Rule" id="MF_00338"/>
    </source>
</evidence>
<dbReference type="EMBL" id="CP000462">
    <property type="protein sequence ID" value="ABK35875.1"/>
    <property type="molecule type" value="Genomic_DNA"/>
</dbReference>
<dbReference type="RefSeq" id="WP_011706400.1">
    <property type="nucleotide sequence ID" value="NC_008570.1"/>
</dbReference>
<dbReference type="RefSeq" id="YP_857090.1">
    <property type="nucleotide sequence ID" value="NC_008570.1"/>
</dbReference>
<dbReference type="SMR" id="A0KLD9"/>
<dbReference type="STRING" id="380703.AHA_2580"/>
<dbReference type="EnsemblBacteria" id="ABK35875">
    <property type="protein sequence ID" value="ABK35875"/>
    <property type="gene ID" value="AHA_2580"/>
</dbReference>
<dbReference type="GeneID" id="4490902"/>
<dbReference type="KEGG" id="aha:AHA_2580"/>
<dbReference type="PATRIC" id="fig|380703.7.peg.2579"/>
<dbReference type="eggNOG" id="COG0393">
    <property type="taxonomic scope" value="Bacteria"/>
</dbReference>
<dbReference type="HOGENOM" id="CLU_117144_3_2_6"/>
<dbReference type="OrthoDB" id="9796448at2"/>
<dbReference type="Proteomes" id="UP000000756">
    <property type="component" value="Chromosome"/>
</dbReference>
<dbReference type="Gene3D" id="3.30.110.70">
    <property type="entry name" value="Hypothetical protein apc22750. Chain B"/>
    <property type="match status" value="1"/>
</dbReference>
<dbReference type="HAMAP" id="MF_00338">
    <property type="entry name" value="UPF0145"/>
    <property type="match status" value="1"/>
</dbReference>
<dbReference type="InterPro" id="IPR035439">
    <property type="entry name" value="UPF0145_dom_sf"/>
</dbReference>
<dbReference type="InterPro" id="IPR002765">
    <property type="entry name" value="UPF0145_YbjQ-like"/>
</dbReference>
<dbReference type="NCBIfam" id="NF002776">
    <property type="entry name" value="PRK02877.1"/>
    <property type="match status" value="1"/>
</dbReference>
<dbReference type="PANTHER" id="PTHR34068">
    <property type="entry name" value="UPF0145 PROTEIN YBJQ"/>
    <property type="match status" value="1"/>
</dbReference>
<dbReference type="PANTHER" id="PTHR34068:SF1">
    <property type="entry name" value="UPF0145 PROTEIN YBJQ"/>
    <property type="match status" value="1"/>
</dbReference>
<dbReference type="Pfam" id="PF01906">
    <property type="entry name" value="YbjQ_1"/>
    <property type="match status" value="1"/>
</dbReference>
<dbReference type="SUPFAM" id="SSF117782">
    <property type="entry name" value="YbjQ-like"/>
    <property type="match status" value="1"/>
</dbReference>
<gene>
    <name type="ordered locus">AHA_2580</name>
</gene>
<protein>
    <recommendedName>
        <fullName evidence="1">UPF0145 protein AHA_2580</fullName>
    </recommendedName>
</protein>
<name>Y2580_AERHH</name>
<accession>A0KLD9</accession>